<sequence length="99" mass="11324">MMMNAFFPAMALMVLVGCSTPSPVQKAQRVKVDPLRSLNMEALCKDQAAKRYNTGEQKIDVTAFEQFQGSYEMRGYTFRKEQFVCSFDADGHFLHLSMR</sequence>
<comment type="subcellular location">
    <subcellularLocation>
        <location evidence="2">Cell membrane</location>
        <topology evidence="2">Lipid-anchor</topology>
    </subcellularLocation>
</comment>
<protein>
    <recommendedName>
        <fullName>Uncharacterized lipoprotein YsaB</fullName>
    </recommendedName>
</protein>
<evidence type="ECO:0000255" key="1"/>
<evidence type="ECO:0000305" key="2"/>
<keyword id="KW-1003">Cell membrane</keyword>
<keyword id="KW-0449">Lipoprotein</keyword>
<keyword id="KW-0472">Membrane</keyword>
<keyword id="KW-0564">Palmitate</keyword>
<keyword id="KW-0732">Signal</keyword>
<reference key="1">
    <citation type="journal article" date="2005" name="Nucleic Acids Res.">
        <title>Genome dynamics and diversity of Shigella species, the etiologic agents of bacillary dysentery.</title>
        <authorList>
            <person name="Yang F."/>
            <person name="Yang J."/>
            <person name="Zhang X."/>
            <person name="Chen L."/>
            <person name="Jiang Y."/>
            <person name="Yan Y."/>
            <person name="Tang X."/>
            <person name="Wang J."/>
            <person name="Xiong Z."/>
            <person name="Dong J."/>
            <person name="Xue Y."/>
            <person name="Zhu Y."/>
            <person name="Xu X."/>
            <person name="Sun L."/>
            <person name="Chen S."/>
            <person name="Nie H."/>
            <person name="Peng J."/>
            <person name="Xu J."/>
            <person name="Wang Y."/>
            <person name="Yuan Z."/>
            <person name="Wen Y."/>
            <person name="Yao Z."/>
            <person name="Shen Y."/>
            <person name="Qiang B."/>
            <person name="Hou Y."/>
            <person name="Yu J."/>
            <person name="Jin Q."/>
        </authorList>
    </citation>
    <scope>NUCLEOTIDE SEQUENCE [LARGE SCALE GENOMIC DNA]</scope>
    <source>
        <strain>Sb227</strain>
    </source>
</reference>
<organism>
    <name type="scientific">Shigella boydii serotype 4 (strain Sb227)</name>
    <dbReference type="NCBI Taxonomy" id="300268"/>
    <lineage>
        <taxon>Bacteria</taxon>
        <taxon>Pseudomonadati</taxon>
        <taxon>Pseudomonadota</taxon>
        <taxon>Gammaproteobacteria</taxon>
        <taxon>Enterobacterales</taxon>
        <taxon>Enterobacteriaceae</taxon>
        <taxon>Shigella</taxon>
    </lineage>
</organism>
<proteinExistence type="inferred from homology"/>
<feature type="signal peptide" evidence="1">
    <location>
        <begin position="1"/>
        <end position="17"/>
    </location>
</feature>
<feature type="chain" id="PRO_0000268617" description="Uncharacterized lipoprotein YsaB">
    <location>
        <begin position="18"/>
        <end position="99"/>
    </location>
</feature>
<feature type="lipid moiety-binding region" description="N-palmitoyl cysteine" evidence="1">
    <location>
        <position position="18"/>
    </location>
</feature>
<feature type="lipid moiety-binding region" description="S-diacylglycerol cysteine" evidence="1">
    <location>
        <position position="18"/>
    </location>
</feature>
<gene>
    <name type="primary">ysaB</name>
    <name type="ordered locus">SBO_3566</name>
</gene>
<name>YSAB_SHIBS</name>
<accession>Q31V60</accession>
<dbReference type="EMBL" id="CP000036">
    <property type="protein sequence ID" value="ABB68048.1"/>
    <property type="molecule type" value="Genomic_DNA"/>
</dbReference>
<dbReference type="RefSeq" id="WP_000980111.1">
    <property type="nucleotide sequence ID" value="NC_007613.1"/>
</dbReference>
<dbReference type="KEGG" id="sbo:SBO_3566"/>
<dbReference type="HOGENOM" id="CLU_162515_0_0_6"/>
<dbReference type="Proteomes" id="UP000007067">
    <property type="component" value="Chromosome"/>
</dbReference>
<dbReference type="GO" id="GO:0005886">
    <property type="term" value="C:plasma membrane"/>
    <property type="evidence" value="ECO:0007669"/>
    <property type="project" value="UniProtKB-SubCell"/>
</dbReference>
<dbReference type="InterPro" id="IPR025728">
    <property type="entry name" value="YsaB-like"/>
</dbReference>
<dbReference type="Pfam" id="PF13983">
    <property type="entry name" value="YsaB"/>
    <property type="match status" value="1"/>
</dbReference>